<accession>Q6HQX5</accession>
<accession>Q6KK93</accession>
<accession>Q81X38</accession>
<evidence type="ECO:0000255" key="1"/>
<evidence type="ECO:0000305" key="2"/>
<proteinExistence type="inferred from homology"/>
<feature type="chain" id="PRO_0000157389" description="UPF0324 membrane protein BA_5405/GBAA_5405/BAS5024">
    <location>
        <begin position="1"/>
        <end position="340"/>
    </location>
</feature>
<feature type="transmembrane region" description="Helical" evidence="1">
    <location>
        <begin position="13"/>
        <end position="35"/>
    </location>
</feature>
<feature type="transmembrane region" description="Helical" evidence="1">
    <location>
        <begin position="40"/>
        <end position="59"/>
    </location>
</feature>
<feature type="transmembrane region" description="Helical" evidence="1">
    <location>
        <begin position="99"/>
        <end position="118"/>
    </location>
</feature>
<feature type="transmembrane region" description="Helical" evidence="1">
    <location>
        <begin position="128"/>
        <end position="150"/>
    </location>
</feature>
<feature type="transmembrane region" description="Helical" evidence="1">
    <location>
        <begin position="157"/>
        <end position="179"/>
    </location>
</feature>
<feature type="transmembrane region" description="Helical" evidence="1">
    <location>
        <begin position="189"/>
        <end position="211"/>
    </location>
</feature>
<feature type="transmembrane region" description="Helical" evidence="1">
    <location>
        <begin position="218"/>
        <end position="240"/>
    </location>
</feature>
<feature type="transmembrane region" description="Helical" evidence="1">
    <location>
        <begin position="255"/>
        <end position="277"/>
    </location>
</feature>
<feature type="transmembrane region" description="Helical" evidence="1">
    <location>
        <begin position="279"/>
        <end position="301"/>
    </location>
</feature>
<feature type="transmembrane region" description="Helical" evidence="1">
    <location>
        <begin position="316"/>
        <end position="338"/>
    </location>
</feature>
<organism>
    <name type="scientific">Bacillus anthracis</name>
    <dbReference type="NCBI Taxonomy" id="1392"/>
    <lineage>
        <taxon>Bacteria</taxon>
        <taxon>Bacillati</taxon>
        <taxon>Bacillota</taxon>
        <taxon>Bacilli</taxon>
        <taxon>Bacillales</taxon>
        <taxon>Bacillaceae</taxon>
        <taxon>Bacillus</taxon>
        <taxon>Bacillus cereus group</taxon>
    </lineage>
</organism>
<dbReference type="EMBL" id="AE016879">
    <property type="protein sequence ID" value="AAP29064.1"/>
    <property type="molecule type" value="Genomic_DNA"/>
</dbReference>
<dbReference type="EMBL" id="AE017334">
    <property type="protein sequence ID" value="AAT34543.2"/>
    <property type="molecule type" value="Genomic_DNA"/>
</dbReference>
<dbReference type="EMBL" id="AE017225">
    <property type="protein sequence ID" value="AAT57313.1"/>
    <property type="status" value="ALT_INIT"/>
    <property type="molecule type" value="Genomic_DNA"/>
</dbReference>
<dbReference type="RefSeq" id="NP_847578.1">
    <property type="nucleotide sequence ID" value="NC_003997.3"/>
</dbReference>
<dbReference type="RefSeq" id="WP_000438452.1">
    <property type="nucleotide sequence ID" value="NZ_WXXJ01000012.1"/>
</dbReference>
<dbReference type="IntAct" id="Q6HQX5">
    <property type="interactions" value="2"/>
</dbReference>
<dbReference type="STRING" id="261594.GBAA_5405"/>
<dbReference type="DNASU" id="1084987"/>
<dbReference type="GeneID" id="45025008"/>
<dbReference type="KEGG" id="ban:BA_5405"/>
<dbReference type="KEGG" id="bar:GBAA_5405"/>
<dbReference type="KEGG" id="bat:BAS5024"/>
<dbReference type="PATRIC" id="fig|198094.11.peg.5364"/>
<dbReference type="eggNOG" id="COG2855">
    <property type="taxonomic scope" value="Bacteria"/>
</dbReference>
<dbReference type="HOGENOM" id="CLU_033541_0_1_9"/>
<dbReference type="OMA" id="LTRALWI"/>
<dbReference type="OrthoDB" id="9811391at2"/>
<dbReference type="Proteomes" id="UP000000427">
    <property type="component" value="Chromosome"/>
</dbReference>
<dbReference type="Proteomes" id="UP000000594">
    <property type="component" value="Chromosome"/>
</dbReference>
<dbReference type="GO" id="GO:0005886">
    <property type="term" value="C:plasma membrane"/>
    <property type="evidence" value="ECO:0007669"/>
    <property type="project" value="UniProtKB-SubCell"/>
</dbReference>
<dbReference type="InterPro" id="IPR018383">
    <property type="entry name" value="UPF0324_pro"/>
</dbReference>
<dbReference type="PANTHER" id="PTHR30106">
    <property type="entry name" value="INNER MEMBRANE PROTEIN YEIH-RELATED"/>
    <property type="match status" value="1"/>
</dbReference>
<dbReference type="PANTHER" id="PTHR30106:SF2">
    <property type="entry name" value="UPF0324 INNER MEMBRANE PROTEIN YEIH"/>
    <property type="match status" value="1"/>
</dbReference>
<dbReference type="Pfam" id="PF03601">
    <property type="entry name" value="Cons_hypoth698"/>
    <property type="match status" value="1"/>
</dbReference>
<gene>
    <name type="ordered locus">BA_5405</name>
    <name type="ordered locus">GBAA_5405</name>
    <name type="ordered locus">BAS5024</name>
</gene>
<sequence length="340" mass="35988">MEQTLVIQKKKRFGFSQGIGITLLIAIVAKYLAELPFLNIMGQLVIAILIGMVWRAAIGVPHDAIAGTNFASKKLLRFGIILLGMRLNLVDIAKAGPKVLVIAAVVITFTLFVVYGLTKVFKVEKKLGILTACGTAICGAAAVVAIAPQVKAKDDETAVGAAIIAILGTIFTLIYTLLYPVLGFSPYGYGVFSGATLHEIAHVIAAAAPGGSTAVDIAVIVKLTRVTMLVPVAILIGVWFGKSEGSKEKRSWRDLPIPWFIFGFLAMSAVHSLGIIPEVVAGYIVVLAYMLIAMAMAGLGLNVEFKTFRKLGSKAFVAGLIGSVCLSVLGYVLVYALGFM</sequence>
<protein>
    <recommendedName>
        <fullName>UPF0324 membrane protein BA_5405/GBAA_5405/BAS5024</fullName>
    </recommendedName>
</protein>
<keyword id="KW-1003">Cell membrane</keyword>
<keyword id="KW-0472">Membrane</keyword>
<keyword id="KW-1185">Reference proteome</keyword>
<keyword id="KW-0812">Transmembrane</keyword>
<keyword id="KW-1133">Transmembrane helix</keyword>
<reference key="1">
    <citation type="journal article" date="2003" name="Nature">
        <title>The genome sequence of Bacillus anthracis Ames and comparison to closely related bacteria.</title>
        <authorList>
            <person name="Read T.D."/>
            <person name="Peterson S.N."/>
            <person name="Tourasse N.J."/>
            <person name="Baillie L.W."/>
            <person name="Paulsen I.T."/>
            <person name="Nelson K.E."/>
            <person name="Tettelin H."/>
            <person name="Fouts D.E."/>
            <person name="Eisen J.A."/>
            <person name="Gill S.R."/>
            <person name="Holtzapple E.K."/>
            <person name="Okstad O.A."/>
            <person name="Helgason E."/>
            <person name="Rilstone J."/>
            <person name="Wu M."/>
            <person name="Kolonay J.F."/>
            <person name="Beanan M.J."/>
            <person name="Dodson R.J."/>
            <person name="Brinkac L.M."/>
            <person name="Gwinn M.L."/>
            <person name="DeBoy R.T."/>
            <person name="Madpu R."/>
            <person name="Daugherty S.C."/>
            <person name="Durkin A.S."/>
            <person name="Haft D.H."/>
            <person name="Nelson W.C."/>
            <person name="Peterson J.D."/>
            <person name="Pop M."/>
            <person name="Khouri H.M."/>
            <person name="Radune D."/>
            <person name="Benton J.L."/>
            <person name="Mahamoud Y."/>
            <person name="Jiang L."/>
            <person name="Hance I.R."/>
            <person name="Weidman J.F."/>
            <person name="Berry K.J."/>
            <person name="Plaut R.D."/>
            <person name="Wolf A.M."/>
            <person name="Watkins K.L."/>
            <person name="Nierman W.C."/>
            <person name="Hazen A."/>
            <person name="Cline R.T."/>
            <person name="Redmond C."/>
            <person name="Thwaite J.E."/>
            <person name="White O."/>
            <person name="Salzberg S.L."/>
            <person name="Thomason B."/>
            <person name="Friedlander A.M."/>
            <person name="Koehler T.M."/>
            <person name="Hanna P.C."/>
            <person name="Kolstoe A.-B."/>
            <person name="Fraser C.M."/>
        </authorList>
    </citation>
    <scope>NUCLEOTIDE SEQUENCE [LARGE SCALE GENOMIC DNA]</scope>
    <source>
        <strain>Ames / isolate Porton</strain>
    </source>
</reference>
<reference key="2">
    <citation type="journal article" date="2009" name="J. Bacteriol.">
        <title>The complete genome sequence of Bacillus anthracis Ames 'Ancestor'.</title>
        <authorList>
            <person name="Ravel J."/>
            <person name="Jiang L."/>
            <person name="Stanley S.T."/>
            <person name="Wilson M.R."/>
            <person name="Decker R.S."/>
            <person name="Read T.D."/>
            <person name="Worsham P."/>
            <person name="Keim P.S."/>
            <person name="Salzberg S.L."/>
            <person name="Fraser-Liggett C.M."/>
            <person name="Rasko D.A."/>
        </authorList>
    </citation>
    <scope>NUCLEOTIDE SEQUENCE [LARGE SCALE GENOMIC DNA]</scope>
    <source>
        <strain>Ames ancestor</strain>
    </source>
</reference>
<reference key="3">
    <citation type="submission" date="2004-01" db="EMBL/GenBank/DDBJ databases">
        <title>Complete genome sequence of Bacillus anthracis Sterne.</title>
        <authorList>
            <person name="Brettin T.S."/>
            <person name="Bruce D."/>
            <person name="Challacombe J.F."/>
            <person name="Gilna P."/>
            <person name="Han C."/>
            <person name="Hill K."/>
            <person name="Hitchcock P."/>
            <person name="Jackson P."/>
            <person name="Keim P."/>
            <person name="Longmire J."/>
            <person name="Lucas S."/>
            <person name="Okinaka R."/>
            <person name="Richardson P."/>
            <person name="Rubin E."/>
            <person name="Tice H."/>
        </authorList>
    </citation>
    <scope>NUCLEOTIDE SEQUENCE [LARGE SCALE GENOMIC DNA]</scope>
    <source>
        <strain>Sterne</strain>
    </source>
</reference>
<name>Y5405_BACAN</name>
<comment type="subcellular location">
    <subcellularLocation>
        <location evidence="2">Cell membrane</location>
        <topology evidence="2">Multi-pass membrane protein</topology>
    </subcellularLocation>
</comment>
<comment type="similarity">
    <text evidence="2">Belongs to the UPF0324 family.</text>
</comment>
<comment type="sequence caution" evidence="2">
    <conflict type="erroneous initiation">
        <sequence resource="EMBL-CDS" id="AAT57313"/>
    </conflict>
</comment>